<reference key="1">
    <citation type="submission" date="2001-03" db="EMBL/GenBank/DDBJ databases">
        <title>Isolation of full-length cDNA clones from macaque brain cDNA libraries.</title>
        <authorList>
            <person name="Osada N."/>
            <person name="Hida M."/>
            <person name="Kusuda J."/>
            <person name="Tanuma R."/>
            <person name="Iseki K."/>
            <person name="Hirai M."/>
            <person name="Terao K."/>
            <person name="Suzuki Y."/>
            <person name="Sugano S."/>
            <person name="Hashimoto K."/>
        </authorList>
    </citation>
    <scope>NUCLEOTIDE SEQUENCE [LARGE SCALE MRNA]</scope>
    <source>
        <tissue>Frontal cortex</tissue>
    </source>
</reference>
<proteinExistence type="evidence at transcript level"/>
<name>T255A_MACFA</name>
<gene>
    <name type="primary">TMEM255A</name>
    <name type="synonym">FAM70A</name>
    <name type="ORF">QflA-14260</name>
</gene>
<protein>
    <recommendedName>
        <fullName>Transmembrane protein 255A</fullName>
    </recommendedName>
    <alternativeName>
        <fullName>Protein FAM70A</fullName>
    </alternativeName>
</protein>
<keyword id="KW-0472">Membrane</keyword>
<keyword id="KW-1185">Reference proteome</keyword>
<keyword id="KW-0812">Transmembrane</keyword>
<keyword id="KW-1133">Transmembrane helix</keyword>
<organism>
    <name type="scientific">Macaca fascicularis</name>
    <name type="common">Crab-eating macaque</name>
    <name type="synonym">Cynomolgus monkey</name>
    <dbReference type="NCBI Taxonomy" id="9541"/>
    <lineage>
        <taxon>Eukaryota</taxon>
        <taxon>Metazoa</taxon>
        <taxon>Chordata</taxon>
        <taxon>Craniata</taxon>
        <taxon>Vertebrata</taxon>
        <taxon>Euteleostomi</taxon>
        <taxon>Mammalia</taxon>
        <taxon>Eutheria</taxon>
        <taxon>Euarchontoglires</taxon>
        <taxon>Primates</taxon>
        <taxon>Haplorrhini</taxon>
        <taxon>Catarrhini</taxon>
        <taxon>Cercopithecidae</taxon>
        <taxon>Cercopithecinae</taxon>
        <taxon>Macaca</taxon>
    </lineage>
</organism>
<sequence length="349" mass="38527">MHQSLTQQRSSDMSLPDSMGAFNRRKRNSIYVTVTLLIVSVLILTVGLAATTRTQNVTVGGYYPGVILGFGSFLGIIGSNLIENKRQMLVASIVFISFGVIAAFCCAIVDGVFAARHIDLKPLYANRCHYVPKTSQKEAEEVISSSTKNSPSTRVMRNLTQAAREVNCPHLSREFCTPRIRGNTCFCCDLYNCGNRVEITGGYYEYIDVSSCQDIIHLYHLLWSATILNIVGLFLGIITAAVLGGFKDMNPTLPAMNCSVENTHPTVSYYAHPQVTSYNTYYHSPPHLPPYSAYDFQHSSVFPSSPPSGLSDEPQSASPSPSYMWSSSAPPRYSPPYYPPFEKPPPYSP</sequence>
<accession>Q9BE63</accession>
<evidence type="ECO:0000255" key="1"/>
<evidence type="ECO:0000256" key="2">
    <source>
        <dbReference type="SAM" id="MobiDB-lite"/>
    </source>
</evidence>
<evidence type="ECO:0000305" key="3"/>
<dbReference type="EMBL" id="AB056807">
    <property type="protein sequence ID" value="BAB39331.1"/>
    <property type="molecule type" value="mRNA"/>
</dbReference>
<dbReference type="RefSeq" id="NP_001306549.1">
    <property type="nucleotide sequence ID" value="NM_001319620.1"/>
</dbReference>
<dbReference type="STRING" id="9541.ENSMFAP00000001191"/>
<dbReference type="eggNOG" id="ENOG502QVX8">
    <property type="taxonomic scope" value="Eukaryota"/>
</dbReference>
<dbReference type="Proteomes" id="UP000233100">
    <property type="component" value="Unplaced"/>
</dbReference>
<dbReference type="GO" id="GO:0016020">
    <property type="term" value="C:membrane"/>
    <property type="evidence" value="ECO:0007669"/>
    <property type="project" value="UniProtKB-SubCell"/>
</dbReference>
<dbReference type="InterPro" id="IPR028014">
    <property type="entry name" value="TMEM255"/>
</dbReference>
<dbReference type="PANTHER" id="PTHR33721:SF1">
    <property type="entry name" value="TRANSMEMBRANE PROTEIN 255A"/>
    <property type="match status" value="1"/>
</dbReference>
<dbReference type="PANTHER" id="PTHR33721">
    <property type="entry name" value="TRANSMEMBRANE PROTEIN 255B-LIKE"/>
    <property type="match status" value="1"/>
</dbReference>
<dbReference type="Pfam" id="PF14967">
    <property type="entry name" value="FAM70"/>
    <property type="match status" value="1"/>
</dbReference>
<comment type="subcellular location">
    <subcellularLocation>
        <location evidence="3">Membrane</location>
        <topology evidence="3">Multi-pass membrane protein</topology>
    </subcellularLocation>
</comment>
<comment type="similarity">
    <text evidence="3">Belongs to the TMEM255 family.</text>
</comment>
<feature type="chain" id="PRO_0000266038" description="Transmembrane protein 255A">
    <location>
        <begin position="1"/>
        <end position="349"/>
    </location>
</feature>
<feature type="transmembrane region" description="Helical" evidence="1">
    <location>
        <begin position="30"/>
        <end position="50"/>
    </location>
</feature>
<feature type="transmembrane region" description="Helical" evidence="1">
    <location>
        <begin position="57"/>
        <end position="77"/>
    </location>
</feature>
<feature type="transmembrane region" description="Helical" evidence="1">
    <location>
        <begin position="89"/>
        <end position="109"/>
    </location>
</feature>
<feature type="transmembrane region" description="Helical" evidence="1">
    <location>
        <begin position="226"/>
        <end position="246"/>
    </location>
</feature>
<feature type="region of interest" description="Disordered" evidence="2">
    <location>
        <begin position="301"/>
        <end position="329"/>
    </location>
</feature>
<feature type="compositionally biased region" description="Low complexity" evidence="2">
    <location>
        <begin position="316"/>
        <end position="329"/>
    </location>
</feature>